<reference key="1">
    <citation type="journal article" date="2010" name="Genome Biol. Evol.">
        <title>Continuing evolution of Burkholderia mallei through genome reduction and large-scale rearrangements.</title>
        <authorList>
            <person name="Losada L."/>
            <person name="Ronning C.M."/>
            <person name="DeShazer D."/>
            <person name="Woods D."/>
            <person name="Fedorova N."/>
            <person name="Kim H.S."/>
            <person name="Shabalina S.A."/>
            <person name="Pearson T.R."/>
            <person name="Brinkac L."/>
            <person name="Tan P."/>
            <person name="Nandi T."/>
            <person name="Crabtree J."/>
            <person name="Badger J."/>
            <person name="Beckstrom-Sternberg S."/>
            <person name="Saqib M."/>
            <person name="Schutzer S.E."/>
            <person name="Keim P."/>
            <person name="Nierman W.C."/>
        </authorList>
    </citation>
    <scope>NUCLEOTIDE SEQUENCE [LARGE SCALE GENOMIC DNA]</scope>
    <source>
        <strain>SAVP1</strain>
    </source>
</reference>
<feature type="chain" id="PRO_1000013194" description="UDP-3-O-acyl-N-acetylglucosamine deacetylase">
    <location>
        <begin position="1"/>
        <end position="305"/>
    </location>
</feature>
<feature type="active site" description="Proton donor" evidence="1">
    <location>
        <position position="264"/>
    </location>
</feature>
<feature type="binding site" evidence="1">
    <location>
        <position position="78"/>
    </location>
    <ligand>
        <name>Zn(2+)</name>
        <dbReference type="ChEBI" id="CHEBI:29105"/>
    </ligand>
</feature>
<feature type="binding site" evidence="1">
    <location>
        <position position="237"/>
    </location>
    <ligand>
        <name>Zn(2+)</name>
        <dbReference type="ChEBI" id="CHEBI:29105"/>
    </ligand>
</feature>
<feature type="binding site" evidence="1">
    <location>
        <position position="241"/>
    </location>
    <ligand>
        <name>Zn(2+)</name>
        <dbReference type="ChEBI" id="CHEBI:29105"/>
    </ligand>
</feature>
<name>LPXC_BURMS</name>
<dbReference type="EC" id="3.5.1.108" evidence="1"/>
<dbReference type="EMBL" id="CP000526">
    <property type="protein sequence ID" value="ABM52687.1"/>
    <property type="molecule type" value="Genomic_DNA"/>
</dbReference>
<dbReference type="RefSeq" id="WP_004194158.1">
    <property type="nucleotide sequence ID" value="NC_008785.1"/>
</dbReference>
<dbReference type="SMR" id="A1V0R0"/>
<dbReference type="GeneID" id="93061620"/>
<dbReference type="KEGG" id="bmv:BMASAVP1_A0464"/>
<dbReference type="HOGENOM" id="CLU_046528_1_0_4"/>
<dbReference type="UniPathway" id="UPA00359">
    <property type="reaction ID" value="UER00478"/>
</dbReference>
<dbReference type="GO" id="GO:0016020">
    <property type="term" value="C:membrane"/>
    <property type="evidence" value="ECO:0007669"/>
    <property type="project" value="GOC"/>
</dbReference>
<dbReference type="GO" id="GO:0046872">
    <property type="term" value="F:metal ion binding"/>
    <property type="evidence" value="ECO:0007669"/>
    <property type="project" value="UniProtKB-KW"/>
</dbReference>
<dbReference type="GO" id="GO:0103117">
    <property type="term" value="F:UDP-3-O-acyl-N-acetylglucosamine deacetylase activity"/>
    <property type="evidence" value="ECO:0007669"/>
    <property type="project" value="UniProtKB-UniRule"/>
</dbReference>
<dbReference type="GO" id="GO:0009245">
    <property type="term" value="P:lipid A biosynthetic process"/>
    <property type="evidence" value="ECO:0007669"/>
    <property type="project" value="UniProtKB-UniRule"/>
</dbReference>
<dbReference type="Gene3D" id="3.30.230.20">
    <property type="entry name" value="lpxc deacetylase, domain 1"/>
    <property type="match status" value="1"/>
</dbReference>
<dbReference type="Gene3D" id="3.30.1700.10">
    <property type="entry name" value="lpxc deacetylase, domain 2"/>
    <property type="match status" value="1"/>
</dbReference>
<dbReference type="HAMAP" id="MF_00388">
    <property type="entry name" value="LpxC"/>
    <property type="match status" value="1"/>
</dbReference>
<dbReference type="InterPro" id="IPR020568">
    <property type="entry name" value="Ribosomal_Su5_D2-typ_SF"/>
</dbReference>
<dbReference type="InterPro" id="IPR004463">
    <property type="entry name" value="UDP-acyl_GlcNac_deAcase"/>
</dbReference>
<dbReference type="InterPro" id="IPR011334">
    <property type="entry name" value="UDP-acyl_GlcNac_deAcase_C"/>
</dbReference>
<dbReference type="InterPro" id="IPR015870">
    <property type="entry name" value="UDP-acyl_N-AcGlcN_deAcase_N"/>
</dbReference>
<dbReference type="NCBIfam" id="TIGR00325">
    <property type="entry name" value="lpxC"/>
    <property type="match status" value="1"/>
</dbReference>
<dbReference type="PANTHER" id="PTHR33694">
    <property type="entry name" value="UDP-3-O-ACYL-N-ACETYLGLUCOSAMINE DEACETYLASE 1, MITOCHONDRIAL-RELATED"/>
    <property type="match status" value="1"/>
</dbReference>
<dbReference type="PANTHER" id="PTHR33694:SF1">
    <property type="entry name" value="UDP-3-O-ACYL-N-ACETYLGLUCOSAMINE DEACETYLASE 1, MITOCHONDRIAL-RELATED"/>
    <property type="match status" value="1"/>
</dbReference>
<dbReference type="Pfam" id="PF03331">
    <property type="entry name" value="LpxC"/>
    <property type="match status" value="1"/>
</dbReference>
<dbReference type="SUPFAM" id="SSF54211">
    <property type="entry name" value="Ribosomal protein S5 domain 2-like"/>
    <property type="match status" value="2"/>
</dbReference>
<gene>
    <name evidence="1" type="primary">lpxC</name>
    <name type="ordered locus">BMASAVP1_A0464</name>
</gene>
<evidence type="ECO:0000255" key="1">
    <source>
        <dbReference type="HAMAP-Rule" id="MF_00388"/>
    </source>
</evidence>
<comment type="function">
    <text evidence="1">Catalyzes the hydrolysis of UDP-3-O-myristoyl-N-acetylglucosamine to form UDP-3-O-myristoylglucosamine and acetate, the committed step in lipid A biosynthesis.</text>
</comment>
<comment type="catalytic activity">
    <reaction evidence="1">
        <text>a UDP-3-O-[(3R)-3-hydroxyacyl]-N-acetyl-alpha-D-glucosamine + H2O = a UDP-3-O-[(3R)-3-hydroxyacyl]-alpha-D-glucosamine + acetate</text>
        <dbReference type="Rhea" id="RHEA:67816"/>
        <dbReference type="ChEBI" id="CHEBI:15377"/>
        <dbReference type="ChEBI" id="CHEBI:30089"/>
        <dbReference type="ChEBI" id="CHEBI:137740"/>
        <dbReference type="ChEBI" id="CHEBI:173225"/>
        <dbReference type="EC" id="3.5.1.108"/>
    </reaction>
</comment>
<comment type="cofactor">
    <cofactor evidence="1">
        <name>Zn(2+)</name>
        <dbReference type="ChEBI" id="CHEBI:29105"/>
    </cofactor>
</comment>
<comment type="pathway">
    <text evidence="1">Glycolipid biosynthesis; lipid IV(A) biosynthesis; lipid IV(A) from (3R)-3-hydroxytetradecanoyl-[acyl-carrier-protein] and UDP-N-acetyl-alpha-D-glucosamine: step 2/6.</text>
</comment>
<comment type="similarity">
    <text evidence="1">Belongs to the LpxC family.</text>
</comment>
<accession>A1V0R0</accession>
<sequence length="305" mass="33526">MLKQRTIKSIVKTVGIGVHSGRKVELTLRPAAPDTGIVFSRVDLPTPVDIPASALSIGDTRLASVLQKDGVRVSTVEHLMSACAGLGIDNLYVDVTAEEIPIMDGSAATFVFLIQSAGIEEQNAAKKFIKVTKPVEIRDGDKFARLDPYFGFKLKFTIDFRHPAVDKTGQELEVDFANTSYVREIARARTFGFAHEVEMMRELGLARGGSMDNAIVLDEYRILNNDGLRYDDEFVKHKMLDAIGDLYVIGHPLLASYTAYKSGHGLNNALLRELLAHEQAYEIVTFDDPKTAPTGFGFDAQTAFA</sequence>
<organism>
    <name type="scientific">Burkholderia mallei (strain SAVP1)</name>
    <dbReference type="NCBI Taxonomy" id="320388"/>
    <lineage>
        <taxon>Bacteria</taxon>
        <taxon>Pseudomonadati</taxon>
        <taxon>Pseudomonadota</taxon>
        <taxon>Betaproteobacteria</taxon>
        <taxon>Burkholderiales</taxon>
        <taxon>Burkholderiaceae</taxon>
        <taxon>Burkholderia</taxon>
        <taxon>pseudomallei group</taxon>
    </lineage>
</organism>
<protein>
    <recommendedName>
        <fullName evidence="1">UDP-3-O-acyl-N-acetylglucosamine deacetylase</fullName>
        <shortName evidence="1">UDP-3-O-acyl-GlcNAc deacetylase</shortName>
        <ecNumber evidence="1">3.5.1.108</ecNumber>
    </recommendedName>
    <alternativeName>
        <fullName evidence="1">UDP-3-O-[R-3-hydroxymyristoyl]-N-acetylglucosamine deacetylase</fullName>
    </alternativeName>
</protein>
<proteinExistence type="inferred from homology"/>
<keyword id="KW-0378">Hydrolase</keyword>
<keyword id="KW-0441">Lipid A biosynthesis</keyword>
<keyword id="KW-0444">Lipid biosynthesis</keyword>
<keyword id="KW-0443">Lipid metabolism</keyword>
<keyword id="KW-0479">Metal-binding</keyword>
<keyword id="KW-0862">Zinc</keyword>